<sequence>MALNLQDKQAIVAEVSEVAKGALSAVVADSRGVTVDKMTELRKAGREAGVYMRVVRNTLLRRVVEGTQFECLKDTFVGPTLIAYSMEHPGAAARLFKEFAKANAKFEVKAAAFEGELIPASQIDRLATLPTYEEAIARLMATMKEASAGKLVRTLAAVRDAKEAA</sequence>
<accession>B5XYF7</accession>
<reference key="1">
    <citation type="journal article" date="2008" name="PLoS Genet.">
        <title>Complete genome sequence of the N2-fixing broad host range endophyte Klebsiella pneumoniae 342 and virulence predictions verified in mice.</title>
        <authorList>
            <person name="Fouts D.E."/>
            <person name="Tyler H.L."/>
            <person name="DeBoy R.T."/>
            <person name="Daugherty S."/>
            <person name="Ren Q."/>
            <person name="Badger J.H."/>
            <person name="Durkin A.S."/>
            <person name="Huot H."/>
            <person name="Shrivastava S."/>
            <person name="Kothari S."/>
            <person name="Dodson R.J."/>
            <person name="Mohamoud Y."/>
            <person name="Khouri H."/>
            <person name="Roesch L.F.W."/>
            <person name="Krogfelt K.A."/>
            <person name="Struve C."/>
            <person name="Triplett E.W."/>
            <person name="Methe B.A."/>
        </authorList>
    </citation>
    <scope>NUCLEOTIDE SEQUENCE [LARGE SCALE GENOMIC DNA]</scope>
    <source>
        <strain>342</strain>
    </source>
</reference>
<dbReference type="EMBL" id="CP000964">
    <property type="protein sequence ID" value="ACI07920.1"/>
    <property type="molecule type" value="Genomic_DNA"/>
</dbReference>
<dbReference type="KEGG" id="kpe:KPK_5311"/>
<dbReference type="HOGENOM" id="CLU_092227_0_2_6"/>
<dbReference type="Proteomes" id="UP000001734">
    <property type="component" value="Chromosome"/>
</dbReference>
<dbReference type="GO" id="GO:0015934">
    <property type="term" value="C:large ribosomal subunit"/>
    <property type="evidence" value="ECO:0007669"/>
    <property type="project" value="InterPro"/>
</dbReference>
<dbReference type="GO" id="GO:0070180">
    <property type="term" value="F:large ribosomal subunit rRNA binding"/>
    <property type="evidence" value="ECO:0007669"/>
    <property type="project" value="UniProtKB-UniRule"/>
</dbReference>
<dbReference type="GO" id="GO:0003735">
    <property type="term" value="F:structural constituent of ribosome"/>
    <property type="evidence" value="ECO:0007669"/>
    <property type="project" value="InterPro"/>
</dbReference>
<dbReference type="GO" id="GO:0006412">
    <property type="term" value="P:translation"/>
    <property type="evidence" value="ECO:0007669"/>
    <property type="project" value="UniProtKB-UniRule"/>
</dbReference>
<dbReference type="CDD" id="cd05797">
    <property type="entry name" value="Ribosomal_L10"/>
    <property type="match status" value="1"/>
</dbReference>
<dbReference type="FunFam" id="3.30.70.1730:FF:000001">
    <property type="entry name" value="50S ribosomal protein L10"/>
    <property type="match status" value="1"/>
</dbReference>
<dbReference type="Gene3D" id="3.30.70.1730">
    <property type="match status" value="1"/>
</dbReference>
<dbReference type="Gene3D" id="6.10.250.2350">
    <property type="match status" value="1"/>
</dbReference>
<dbReference type="HAMAP" id="MF_00362">
    <property type="entry name" value="Ribosomal_uL10"/>
    <property type="match status" value="1"/>
</dbReference>
<dbReference type="InterPro" id="IPR001790">
    <property type="entry name" value="Ribosomal_uL10"/>
</dbReference>
<dbReference type="InterPro" id="IPR043141">
    <property type="entry name" value="Ribosomal_uL10-like_sf"/>
</dbReference>
<dbReference type="InterPro" id="IPR022973">
    <property type="entry name" value="Ribosomal_uL10_bac"/>
</dbReference>
<dbReference type="InterPro" id="IPR047865">
    <property type="entry name" value="Ribosomal_uL10_bac_type"/>
</dbReference>
<dbReference type="InterPro" id="IPR002363">
    <property type="entry name" value="Ribosomal_uL10_CS_bac"/>
</dbReference>
<dbReference type="NCBIfam" id="NF000955">
    <property type="entry name" value="PRK00099.1-1"/>
    <property type="match status" value="1"/>
</dbReference>
<dbReference type="PANTHER" id="PTHR11560">
    <property type="entry name" value="39S RIBOSOMAL PROTEIN L10, MITOCHONDRIAL"/>
    <property type="match status" value="1"/>
</dbReference>
<dbReference type="Pfam" id="PF00466">
    <property type="entry name" value="Ribosomal_L10"/>
    <property type="match status" value="1"/>
</dbReference>
<dbReference type="SUPFAM" id="SSF160369">
    <property type="entry name" value="Ribosomal protein L10-like"/>
    <property type="match status" value="1"/>
</dbReference>
<dbReference type="PROSITE" id="PS01109">
    <property type="entry name" value="RIBOSOMAL_L10"/>
    <property type="match status" value="1"/>
</dbReference>
<comment type="function">
    <text evidence="1">Forms part of the ribosomal stalk, playing a central role in the interaction of the ribosome with GTP-bound translation factors.</text>
</comment>
<comment type="subunit">
    <text evidence="1">Part of the ribosomal stalk of the 50S ribosomal subunit. The N-terminus interacts with L11 and the large rRNA to form the base of the stalk. The C-terminus forms an elongated spine to which L12 dimers bind in a sequential fashion forming a multimeric L10(L12)X complex.</text>
</comment>
<comment type="similarity">
    <text evidence="1">Belongs to the universal ribosomal protein uL10 family.</text>
</comment>
<protein>
    <recommendedName>
        <fullName evidence="1">Large ribosomal subunit protein uL10</fullName>
    </recommendedName>
    <alternativeName>
        <fullName evidence="2">50S ribosomal protein L10</fullName>
    </alternativeName>
</protein>
<evidence type="ECO:0000255" key="1">
    <source>
        <dbReference type="HAMAP-Rule" id="MF_00362"/>
    </source>
</evidence>
<evidence type="ECO:0000305" key="2"/>
<keyword id="KW-0687">Ribonucleoprotein</keyword>
<keyword id="KW-0689">Ribosomal protein</keyword>
<keyword id="KW-0694">RNA-binding</keyword>
<keyword id="KW-0699">rRNA-binding</keyword>
<organism>
    <name type="scientific">Klebsiella pneumoniae (strain 342)</name>
    <dbReference type="NCBI Taxonomy" id="507522"/>
    <lineage>
        <taxon>Bacteria</taxon>
        <taxon>Pseudomonadati</taxon>
        <taxon>Pseudomonadota</taxon>
        <taxon>Gammaproteobacteria</taxon>
        <taxon>Enterobacterales</taxon>
        <taxon>Enterobacteriaceae</taxon>
        <taxon>Klebsiella/Raoultella group</taxon>
        <taxon>Klebsiella</taxon>
        <taxon>Klebsiella pneumoniae complex</taxon>
    </lineage>
</organism>
<gene>
    <name evidence="1" type="primary">rplJ</name>
    <name type="ordered locus">KPK_5311</name>
</gene>
<name>RL10_KLEP3</name>
<feature type="chain" id="PRO_1000120975" description="Large ribosomal subunit protein uL10">
    <location>
        <begin position="1"/>
        <end position="165"/>
    </location>
</feature>
<proteinExistence type="inferred from homology"/>